<proteinExistence type="evidence at protein level"/>
<feature type="chain" id="PRO_0000216897" description="Photosystem II reaction center protein Y">
    <location>
        <begin position="1"/>
        <end position="39"/>
    </location>
</feature>
<feature type="transmembrane region" description="Helical" evidence="4 5">
    <location>
        <begin position="4"/>
        <end position="24"/>
    </location>
</feature>
<feature type="helix" evidence="8">
    <location>
        <begin position="3"/>
        <end position="33"/>
    </location>
</feature>
<organism>
    <name type="scientific">Synechocystis sp. (strain ATCC 27184 / PCC 6803 / Kazusa)</name>
    <dbReference type="NCBI Taxonomy" id="1111708"/>
    <lineage>
        <taxon>Bacteria</taxon>
        <taxon>Bacillati</taxon>
        <taxon>Cyanobacteriota</taxon>
        <taxon>Cyanophyceae</taxon>
        <taxon>Synechococcales</taxon>
        <taxon>Merismopediaceae</taxon>
        <taxon>Synechocystis</taxon>
    </lineage>
</organism>
<name>PSBY_SYNY3</name>
<keyword id="KW-0002">3D-structure</keyword>
<keyword id="KW-0903">Direct protein sequencing</keyword>
<keyword id="KW-0472">Membrane</keyword>
<keyword id="KW-0602">Photosynthesis</keyword>
<keyword id="KW-0604">Photosystem II</keyword>
<keyword id="KW-1185">Reference proteome</keyword>
<keyword id="KW-0793">Thylakoid</keyword>
<keyword id="KW-0812">Transmembrane</keyword>
<keyword id="KW-1133">Transmembrane helix</keyword>
<evidence type="ECO:0000255" key="1">
    <source>
        <dbReference type="HAMAP-Rule" id="MF_00717"/>
    </source>
</evidence>
<evidence type="ECO:0000269" key="2">
    <source>
    </source>
</evidence>
<evidence type="ECO:0000269" key="3">
    <source>
    </source>
</evidence>
<evidence type="ECO:0000269" key="4">
    <source>
    </source>
</evidence>
<evidence type="ECO:0000312" key="5">
    <source>
        <dbReference type="PDB" id="7N8O"/>
    </source>
</evidence>
<evidence type="ECO:0007744" key="6">
    <source>
        <dbReference type="PDB" id="7N8O"/>
    </source>
</evidence>
<evidence type="ECO:0007744" key="7">
    <source>
        <dbReference type="PDB" id="7RCV"/>
    </source>
</evidence>
<evidence type="ECO:0007829" key="8">
    <source>
        <dbReference type="PDB" id="7N8O"/>
    </source>
</evidence>
<comment type="function">
    <text evidence="1 3 4">Loosely associated component of the core of photosystem II (PSII), it is not always seen in crystals. PSII is a light-driven water plastoquinone oxidoreductase, using light energy to abstract electrons from H(2)O, generating a proton gradient subsequently used for ATP formation.</text>
</comment>
<comment type="subunit">
    <text evidence="1 2 4">PSII is composed of 1 copy each of membrane proteins PsbA, PsbB, PsbC, PsbD, PsbE, PsbF, PsbH, PsbI, PsbJ, PsbK, PsbL, PsbM, PsbT, PsbX, PsbY, PsbZ, Psb30/Ycf12, peripheral proteins PsbO, CyanoQ (PsbQ), PsbU, PsbV and a large number of cofactors. It forms dimeric complexes.</text>
</comment>
<comment type="subcellular location">
    <subcellularLocation>
        <location evidence="1 2 4">Cellular thylakoid membrane</location>
        <topology evidence="1 4">Single-pass membrane protein</topology>
    </subcellularLocation>
</comment>
<comment type="disruption phenotype">
    <text evidence="3">No visible growth phenotype, decreased rate of O(2) evolution during growth at 30 degrees Celsius, 50 umol photons/m(2)/s; as light increases above 1000 umol photons/m(2)/s O(2) evolution decreases dramatically. Decreased amounts of peripheral proteins PsbO, CyanoQ (PsbQ), PsbU and PsbV in purified PSII.</text>
</comment>
<comment type="similarity">
    <text evidence="1">Belongs to the PsbY family.</text>
</comment>
<accession>P73676</accession>
<sequence>MDWRVIVVVSPLLIAATWAAINIGAAAIRQLQDVLGREA</sequence>
<gene>
    <name evidence="1" type="primary">psbY</name>
    <name type="ordered locus">sml0007</name>
</gene>
<reference key="1">
    <citation type="journal article" date="1996" name="DNA Res.">
        <title>Sequence analysis of the genome of the unicellular cyanobacterium Synechocystis sp. strain PCC6803. II. Sequence determination of the entire genome and assignment of potential protein-coding regions.</title>
        <authorList>
            <person name="Kaneko T."/>
            <person name="Sato S."/>
            <person name="Kotani H."/>
            <person name="Tanaka A."/>
            <person name="Asamizu E."/>
            <person name="Nakamura Y."/>
            <person name="Miyajima N."/>
            <person name="Hirosawa M."/>
            <person name="Sugiura M."/>
            <person name="Sasamoto S."/>
            <person name="Kimura T."/>
            <person name="Hosouchi T."/>
            <person name="Matsuno A."/>
            <person name="Muraki A."/>
            <person name="Nakazaki N."/>
            <person name="Naruo K."/>
            <person name="Okumura S."/>
            <person name="Shimpo S."/>
            <person name="Takeuchi C."/>
            <person name="Wada T."/>
            <person name="Watanabe A."/>
            <person name="Yamada M."/>
            <person name="Yasuda M."/>
            <person name="Tabata S."/>
        </authorList>
    </citation>
    <scope>NUCLEOTIDE SEQUENCE [LARGE SCALE GENOMIC DNA]</scope>
    <source>
        <strain>ATCC 27184 / PCC 6803 / Kazusa</strain>
    </source>
</reference>
<reference key="2">
    <citation type="journal article" date="2002" name="Biochemistry">
        <title>Proteomic analysis of a highly active photosystem II preparation from the cyanobacterium Synechocystis sp. PCC 6803 reveals the presence of novel polypeptides.</title>
        <authorList>
            <person name="Kashino Y."/>
            <person name="Lauber W.M."/>
            <person name="Carroll J.A."/>
            <person name="Wang Q."/>
            <person name="Whitmarsh J."/>
            <person name="Satoh K."/>
            <person name="Pakrasi H.B."/>
        </authorList>
    </citation>
    <scope>PROTEIN SEQUENCE OF 1-15</scope>
    <scope>SUBUNIT</scope>
    <scope>SUBCELLULAR LOCATION</scope>
    <source>
        <strain>ATCC 27184 / PCC 6803 / Kazusa</strain>
    </source>
</reference>
<reference key="3">
    <citation type="journal article" date="2008" name="Photosyn. Res.">
        <title>Evidence for a stable association of Psb30 (Ycf12) with photosystem II core complex in the cyanobacterium Synechocystis sp. PCC 6803.</title>
        <authorList>
            <person name="Inoue-Kashino N."/>
            <person name="Takahashi T."/>
            <person name="Ban A."/>
            <person name="Sugiura M."/>
            <person name="Takahashi Y."/>
            <person name="Satoh K."/>
            <person name="Kashino Y."/>
        </authorList>
    </citation>
    <scope>FUNCTION</scope>
    <scope>SUBUNIT</scope>
    <scope>SUBCELLULAR LOCATION</scope>
    <scope>DISRUPTION PHENOTYPE</scope>
</reference>
<reference evidence="6 7" key="4">
    <citation type="journal article" date="2022" name="Proc. Natl. Acad. Sci. U.S.A.">
        <title>High-resolution cryo-electron microscopy structure of photosystem II from the mesophilic cyanobacterium, Synechocystis sp. PCC 6803.</title>
        <authorList>
            <person name="Gisriel C.J."/>
            <person name="Wang J."/>
            <person name="Liu J."/>
            <person name="Flesher D.A."/>
            <person name="Reiss K.M."/>
            <person name="Huang H.L."/>
            <person name="Yang K.R."/>
            <person name="Armstrong W.H."/>
            <person name="Gunner M.R."/>
            <person name="Batista V.S."/>
            <person name="Debus R.J."/>
            <person name="Brudvig G.W."/>
        </authorList>
    </citation>
    <scope>STRUCTURE BY ELECTRON MICROSCOPY (1.93 ANGSTROMS) OF 2-35</scope>
    <scope>FUNCTION</scope>
    <scope>SUBUNIT</scope>
    <scope>SUBCELLULAR LOCATION</scope>
    <source>
        <strain>ATCC 27184 / PCC 6803 / Kazusa</strain>
    </source>
</reference>
<protein>
    <recommendedName>
        <fullName evidence="1">Photosystem II reaction center protein Y</fullName>
    </recommendedName>
</protein>
<dbReference type="EMBL" id="BA000022">
    <property type="protein sequence ID" value="BAA17722.1"/>
    <property type="molecule type" value="Genomic_DNA"/>
</dbReference>
<dbReference type="PIR" id="S77164">
    <property type="entry name" value="S77164"/>
</dbReference>
<dbReference type="PDB" id="7N8O">
    <property type="method" value="EM"/>
    <property type="resolution" value="1.93 A"/>
    <property type="chains" value="R/r=2-35"/>
</dbReference>
<dbReference type="PDB" id="7RCV">
    <property type="method" value="EM"/>
    <property type="resolution" value="2.01 A"/>
    <property type="chains" value="R/r=2-35"/>
</dbReference>
<dbReference type="PDB" id="8TOW">
    <property type="method" value="EM"/>
    <property type="resolution" value="2.14 A"/>
    <property type="chains" value="R/r=1-39"/>
</dbReference>
<dbReference type="PDB" id="9EH5">
    <property type="method" value="EM"/>
    <property type="resolution" value="1.97 A"/>
    <property type="chains" value="R/r=1-39"/>
</dbReference>
<dbReference type="PDBsum" id="7N8O"/>
<dbReference type="PDBsum" id="7RCV"/>
<dbReference type="PDBsum" id="8TOW"/>
<dbReference type="PDBsum" id="9EH5"/>
<dbReference type="EMDB" id="EMD-24239"/>
<dbReference type="EMDB" id="EMD-24407"/>
<dbReference type="EMDB" id="EMD-41460"/>
<dbReference type="EMDB" id="EMD-48046"/>
<dbReference type="SMR" id="P73676"/>
<dbReference type="IntAct" id="P73676">
    <property type="interactions" value="1"/>
</dbReference>
<dbReference type="STRING" id="1148.gene:10498589"/>
<dbReference type="PaxDb" id="1148-1652803"/>
<dbReference type="EnsemblBacteria" id="BAA17722">
    <property type="protein sequence ID" value="BAA17722"/>
    <property type="gene ID" value="BAA17722"/>
</dbReference>
<dbReference type="KEGG" id="syn:sml0007"/>
<dbReference type="eggNOG" id="ENOG50314ES">
    <property type="taxonomic scope" value="Bacteria"/>
</dbReference>
<dbReference type="InParanoid" id="P73676"/>
<dbReference type="Proteomes" id="UP000001425">
    <property type="component" value="Chromosome"/>
</dbReference>
<dbReference type="GO" id="GO:0031676">
    <property type="term" value="C:plasma membrane-derived thylakoid membrane"/>
    <property type="evidence" value="ECO:0007669"/>
    <property type="project" value="UniProtKB-SubCell"/>
</dbReference>
<dbReference type="GO" id="GO:0030096">
    <property type="term" value="C:plasma membrane-derived thylakoid photosystem II"/>
    <property type="evidence" value="ECO:0000314"/>
    <property type="project" value="UniProtKB"/>
</dbReference>
<dbReference type="GO" id="GO:0030145">
    <property type="term" value="F:manganese ion binding"/>
    <property type="evidence" value="ECO:0007669"/>
    <property type="project" value="InterPro"/>
</dbReference>
<dbReference type="GO" id="GO:0015979">
    <property type="term" value="P:photosynthesis"/>
    <property type="evidence" value="ECO:0007669"/>
    <property type="project" value="UniProtKB-UniRule"/>
</dbReference>
<dbReference type="HAMAP" id="MF_00717">
    <property type="entry name" value="PSII_PsbY"/>
    <property type="match status" value="1"/>
</dbReference>
<dbReference type="InterPro" id="IPR009388">
    <property type="entry name" value="PSII_PsbY"/>
</dbReference>
<dbReference type="NCBIfam" id="NF009711">
    <property type="entry name" value="PRK13240.1"/>
    <property type="match status" value="1"/>
</dbReference>
<dbReference type="Pfam" id="PF06298">
    <property type="entry name" value="PsbY"/>
    <property type="match status" value="1"/>
</dbReference>